<dbReference type="EC" id="2.7.1.130" evidence="1"/>
<dbReference type="EMBL" id="CP000880">
    <property type="protein sequence ID" value="ABX21857.1"/>
    <property type="molecule type" value="Genomic_DNA"/>
</dbReference>
<dbReference type="SMR" id="A9MHW7"/>
<dbReference type="STRING" id="41514.SARI_01977"/>
<dbReference type="KEGG" id="ses:SARI_01977"/>
<dbReference type="HOGENOM" id="CLU_038816_2_0_6"/>
<dbReference type="UniPathway" id="UPA00359">
    <property type="reaction ID" value="UER00482"/>
</dbReference>
<dbReference type="Proteomes" id="UP000002084">
    <property type="component" value="Chromosome"/>
</dbReference>
<dbReference type="GO" id="GO:0005886">
    <property type="term" value="C:plasma membrane"/>
    <property type="evidence" value="ECO:0007669"/>
    <property type="project" value="TreeGrafter"/>
</dbReference>
<dbReference type="GO" id="GO:0005524">
    <property type="term" value="F:ATP binding"/>
    <property type="evidence" value="ECO:0007669"/>
    <property type="project" value="UniProtKB-UniRule"/>
</dbReference>
<dbReference type="GO" id="GO:0009029">
    <property type="term" value="F:tetraacyldisaccharide 4'-kinase activity"/>
    <property type="evidence" value="ECO:0007669"/>
    <property type="project" value="UniProtKB-UniRule"/>
</dbReference>
<dbReference type="GO" id="GO:0009245">
    <property type="term" value="P:lipid A biosynthetic process"/>
    <property type="evidence" value="ECO:0007669"/>
    <property type="project" value="UniProtKB-UniRule"/>
</dbReference>
<dbReference type="GO" id="GO:0009244">
    <property type="term" value="P:lipopolysaccharide core region biosynthetic process"/>
    <property type="evidence" value="ECO:0007669"/>
    <property type="project" value="TreeGrafter"/>
</dbReference>
<dbReference type="HAMAP" id="MF_00409">
    <property type="entry name" value="LpxK"/>
    <property type="match status" value="1"/>
</dbReference>
<dbReference type="InterPro" id="IPR003758">
    <property type="entry name" value="LpxK"/>
</dbReference>
<dbReference type="InterPro" id="IPR027417">
    <property type="entry name" value="P-loop_NTPase"/>
</dbReference>
<dbReference type="NCBIfam" id="TIGR00682">
    <property type="entry name" value="lpxK"/>
    <property type="match status" value="1"/>
</dbReference>
<dbReference type="PANTHER" id="PTHR42724">
    <property type="entry name" value="TETRAACYLDISACCHARIDE 4'-KINASE"/>
    <property type="match status" value="1"/>
</dbReference>
<dbReference type="PANTHER" id="PTHR42724:SF1">
    <property type="entry name" value="TETRAACYLDISACCHARIDE 4'-KINASE, MITOCHONDRIAL-RELATED"/>
    <property type="match status" value="1"/>
</dbReference>
<dbReference type="Pfam" id="PF02606">
    <property type="entry name" value="LpxK"/>
    <property type="match status" value="1"/>
</dbReference>
<dbReference type="SUPFAM" id="SSF52540">
    <property type="entry name" value="P-loop containing nucleoside triphosphate hydrolases"/>
    <property type="match status" value="1"/>
</dbReference>
<comment type="function">
    <text evidence="1">Transfers the gamma-phosphate of ATP to the 4'-position of a tetraacyldisaccharide 1-phosphate intermediate (termed DS-1-P) to form tetraacyldisaccharide 1,4'-bis-phosphate (lipid IVA).</text>
</comment>
<comment type="catalytic activity">
    <reaction evidence="1">
        <text>a lipid A disaccharide + ATP = a lipid IVA + ADP + H(+)</text>
        <dbReference type="Rhea" id="RHEA:67840"/>
        <dbReference type="ChEBI" id="CHEBI:15378"/>
        <dbReference type="ChEBI" id="CHEBI:30616"/>
        <dbReference type="ChEBI" id="CHEBI:176343"/>
        <dbReference type="ChEBI" id="CHEBI:176425"/>
        <dbReference type="ChEBI" id="CHEBI:456216"/>
        <dbReference type="EC" id="2.7.1.130"/>
    </reaction>
</comment>
<comment type="pathway">
    <text evidence="1">Glycolipid biosynthesis; lipid IV(A) biosynthesis; lipid IV(A) from (3R)-3-hydroxytetradecanoyl-[acyl-carrier-protein] and UDP-N-acetyl-alpha-D-glucosamine: step 6/6.</text>
</comment>
<comment type="similarity">
    <text evidence="1">Belongs to the LpxK family.</text>
</comment>
<reference key="1">
    <citation type="submission" date="2007-11" db="EMBL/GenBank/DDBJ databases">
        <authorList>
            <consortium name="The Salmonella enterica serovar Arizonae Genome Sequencing Project"/>
            <person name="McClelland M."/>
            <person name="Sanderson E.K."/>
            <person name="Porwollik S."/>
            <person name="Spieth J."/>
            <person name="Clifton W.S."/>
            <person name="Fulton R."/>
            <person name="Chunyan W."/>
            <person name="Wollam A."/>
            <person name="Shah N."/>
            <person name="Pepin K."/>
            <person name="Bhonagiri V."/>
            <person name="Nash W."/>
            <person name="Johnson M."/>
            <person name="Thiruvilangam P."/>
            <person name="Wilson R."/>
        </authorList>
    </citation>
    <scope>NUCLEOTIDE SEQUENCE [LARGE SCALE GENOMIC DNA]</scope>
    <source>
        <strain>ATCC BAA-731 / CDC346-86 / RSK2980</strain>
    </source>
</reference>
<sequence>MIARIWSGESPLWRLLLPFSWLYGLVSGAIRLSYKLGLKRAWRAPVPVVVVGNLTAGGNGKTPVVIWLVEQLQRRGVRVGVVSRGYGGKAVAYPLLLTPETTTAEAGDEPVLIYQRTGAPVAVAPERAAAVKAILAAHDVQIIITDDGLQHYRLARDIEIVVIDGVRRFGNGWWLPAGPMRERASRLKTVDAAIVNGGVARAGEIPMQLAPGLAVNLRTGARCDVAQLSNIVAMAGIGHPPRFFATLESCGAHPQKCVPLADHQTLAPADVQALVGEGQTLVMTEKDAVKCRAFAEDNWWFLPVDARLSGEKPDKLLEHITSLVR</sequence>
<keyword id="KW-0067">ATP-binding</keyword>
<keyword id="KW-0418">Kinase</keyword>
<keyword id="KW-0441">Lipid A biosynthesis</keyword>
<keyword id="KW-0444">Lipid biosynthesis</keyword>
<keyword id="KW-0443">Lipid metabolism</keyword>
<keyword id="KW-0547">Nucleotide-binding</keyword>
<keyword id="KW-1185">Reference proteome</keyword>
<keyword id="KW-0808">Transferase</keyword>
<organism>
    <name type="scientific">Salmonella arizonae (strain ATCC BAA-731 / CDC346-86 / RSK2980)</name>
    <dbReference type="NCBI Taxonomy" id="41514"/>
    <lineage>
        <taxon>Bacteria</taxon>
        <taxon>Pseudomonadati</taxon>
        <taxon>Pseudomonadota</taxon>
        <taxon>Gammaproteobacteria</taxon>
        <taxon>Enterobacterales</taxon>
        <taxon>Enterobacteriaceae</taxon>
        <taxon>Salmonella</taxon>
    </lineage>
</organism>
<gene>
    <name evidence="1" type="primary">lpxK</name>
    <name type="ordered locus">SARI_01977</name>
</gene>
<protein>
    <recommendedName>
        <fullName evidence="1">Tetraacyldisaccharide 4'-kinase</fullName>
        <ecNumber evidence="1">2.7.1.130</ecNumber>
    </recommendedName>
    <alternativeName>
        <fullName evidence="1">Lipid A 4'-kinase</fullName>
    </alternativeName>
</protein>
<feature type="chain" id="PRO_1000123736" description="Tetraacyldisaccharide 4'-kinase">
    <location>
        <begin position="1"/>
        <end position="325"/>
    </location>
</feature>
<feature type="binding site" evidence="1">
    <location>
        <begin position="55"/>
        <end position="62"/>
    </location>
    <ligand>
        <name>ATP</name>
        <dbReference type="ChEBI" id="CHEBI:30616"/>
    </ligand>
</feature>
<proteinExistence type="inferred from homology"/>
<evidence type="ECO:0000255" key="1">
    <source>
        <dbReference type="HAMAP-Rule" id="MF_00409"/>
    </source>
</evidence>
<name>LPXK_SALAR</name>
<accession>A9MHW7</accession>